<sequence>MKAQELRTKNVEELKAELINLLGEQFKLRMQAATGQLQQTHQLKQVRRSIAQVKTVLNQKAGE</sequence>
<protein>
    <recommendedName>
        <fullName evidence="1">Large ribosomal subunit protein uL29</fullName>
    </recommendedName>
    <alternativeName>
        <fullName evidence="2">50S ribosomal protein L29</fullName>
    </alternativeName>
</protein>
<feature type="chain" id="PRO_0000130397" description="Large ribosomal subunit protein uL29">
    <location>
        <begin position="1"/>
        <end position="63"/>
    </location>
</feature>
<proteinExistence type="inferred from homology"/>
<gene>
    <name evidence="1" type="primary">rpmC</name>
    <name type="ordered locus">HD_1975</name>
</gene>
<organism>
    <name type="scientific">Haemophilus ducreyi (strain 35000HP / ATCC 700724)</name>
    <dbReference type="NCBI Taxonomy" id="233412"/>
    <lineage>
        <taxon>Bacteria</taxon>
        <taxon>Pseudomonadati</taxon>
        <taxon>Pseudomonadota</taxon>
        <taxon>Gammaproteobacteria</taxon>
        <taxon>Pasteurellales</taxon>
        <taxon>Pasteurellaceae</taxon>
        <taxon>Haemophilus</taxon>
    </lineage>
</organism>
<name>RL29_HAEDU</name>
<reference key="1">
    <citation type="submission" date="2003-06" db="EMBL/GenBank/DDBJ databases">
        <title>The complete genome sequence of Haemophilus ducreyi.</title>
        <authorList>
            <person name="Munson R.S. Jr."/>
            <person name="Ray W.C."/>
            <person name="Mahairas G."/>
            <person name="Sabo P."/>
            <person name="Mungur R."/>
            <person name="Johnson L."/>
            <person name="Nguyen D."/>
            <person name="Wang J."/>
            <person name="Forst C."/>
            <person name="Hood L."/>
        </authorList>
    </citation>
    <scope>NUCLEOTIDE SEQUENCE [LARGE SCALE GENOMIC DNA]</scope>
    <source>
        <strain>35000HP / ATCC 700724</strain>
    </source>
</reference>
<accession>Q7VKD9</accession>
<comment type="similarity">
    <text evidence="1">Belongs to the universal ribosomal protein uL29 family.</text>
</comment>
<dbReference type="EMBL" id="AE017143">
    <property type="protein sequence ID" value="AAP96692.1"/>
    <property type="molecule type" value="Genomic_DNA"/>
</dbReference>
<dbReference type="RefSeq" id="WP_010945714.1">
    <property type="nucleotide sequence ID" value="NC_002940.2"/>
</dbReference>
<dbReference type="SMR" id="Q7VKD9"/>
<dbReference type="STRING" id="233412.HD_1975"/>
<dbReference type="KEGG" id="hdu:HD_1975"/>
<dbReference type="eggNOG" id="COG0255">
    <property type="taxonomic scope" value="Bacteria"/>
</dbReference>
<dbReference type="HOGENOM" id="CLU_158491_1_2_6"/>
<dbReference type="OrthoDB" id="9815192at2"/>
<dbReference type="Proteomes" id="UP000001022">
    <property type="component" value="Chromosome"/>
</dbReference>
<dbReference type="GO" id="GO:0022625">
    <property type="term" value="C:cytosolic large ribosomal subunit"/>
    <property type="evidence" value="ECO:0007669"/>
    <property type="project" value="TreeGrafter"/>
</dbReference>
<dbReference type="GO" id="GO:0003735">
    <property type="term" value="F:structural constituent of ribosome"/>
    <property type="evidence" value="ECO:0007669"/>
    <property type="project" value="InterPro"/>
</dbReference>
<dbReference type="GO" id="GO:0006412">
    <property type="term" value="P:translation"/>
    <property type="evidence" value="ECO:0007669"/>
    <property type="project" value="UniProtKB-UniRule"/>
</dbReference>
<dbReference type="CDD" id="cd00427">
    <property type="entry name" value="Ribosomal_L29_HIP"/>
    <property type="match status" value="1"/>
</dbReference>
<dbReference type="FunFam" id="1.10.287.310:FF:000001">
    <property type="entry name" value="50S ribosomal protein L29"/>
    <property type="match status" value="1"/>
</dbReference>
<dbReference type="Gene3D" id="1.10.287.310">
    <property type="match status" value="1"/>
</dbReference>
<dbReference type="HAMAP" id="MF_00374">
    <property type="entry name" value="Ribosomal_uL29"/>
    <property type="match status" value="1"/>
</dbReference>
<dbReference type="InterPro" id="IPR050063">
    <property type="entry name" value="Ribosomal_protein_uL29"/>
</dbReference>
<dbReference type="InterPro" id="IPR001854">
    <property type="entry name" value="Ribosomal_uL29"/>
</dbReference>
<dbReference type="InterPro" id="IPR018254">
    <property type="entry name" value="Ribosomal_uL29_CS"/>
</dbReference>
<dbReference type="InterPro" id="IPR036049">
    <property type="entry name" value="Ribosomal_uL29_sf"/>
</dbReference>
<dbReference type="NCBIfam" id="TIGR00012">
    <property type="entry name" value="L29"/>
    <property type="match status" value="1"/>
</dbReference>
<dbReference type="PANTHER" id="PTHR10916">
    <property type="entry name" value="60S RIBOSOMAL PROTEIN L35/50S RIBOSOMAL PROTEIN L29"/>
    <property type="match status" value="1"/>
</dbReference>
<dbReference type="PANTHER" id="PTHR10916:SF0">
    <property type="entry name" value="LARGE RIBOSOMAL SUBUNIT PROTEIN UL29C"/>
    <property type="match status" value="1"/>
</dbReference>
<dbReference type="Pfam" id="PF00831">
    <property type="entry name" value="Ribosomal_L29"/>
    <property type="match status" value="1"/>
</dbReference>
<dbReference type="SUPFAM" id="SSF46561">
    <property type="entry name" value="Ribosomal protein L29 (L29p)"/>
    <property type="match status" value="1"/>
</dbReference>
<dbReference type="PROSITE" id="PS00579">
    <property type="entry name" value="RIBOSOMAL_L29"/>
    <property type="match status" value="1"/>
</dbReference>
<evidence type="ECO:0000255" key="1">
    <source>
        <dbReference type="HAMAP-Rule" id="MF_00374"/>
    </source>
</evidence>
<evidence type="ECO:0000305" key="2"/>
<keyword id="KW-1185">Reference proteome</keyword>
<keyword id="KW-0687">Ribonucleoprotein</keyword>
<keyword id="KW-0689">Ribosomal protein</keyword>